<evidence type="ECO:0000250" key="1">
    <source>
        <dbReference type="UniProtKB" id="Q96B02"/>
    </source>
</evidence>
<evidence type="ECO:0000255" key="2">
    <source>
        <dbReference type="PROSITE-ProRule" id="PRU00388"/>
    </source>
</evidence>
<evidence type="ECO:0000269" key="3">
    <source>
    </source>
</evidence>
<evidence type="ECO:0000305" key="4"/>
<evidence type="ECO:0000312" key="5">
    <source>
        <dbReference type="Proteomes" id="UP000001940"/>
    </source>
</evidence>
<evidence type="ECO:0000312" key="6">
    <source>
        <dbReference type="WormBase" id="Y54E5B.4"/>
    </source>
</evidence>
<feature type="chain" id="PRO_0000448278" description="Ubiquitin-conjugating enzyme E2 W">
    <location>
        <begin position="1"/>
        <end position="152"/>
    </location>
</feature>
<feature type="domain" description="UBC core" evidence="2">
    <location>
        <begin position="4"/>
        <end position="152"/>
    </location>
</feature>
<feature type="active site" description="Glycyl thioester intermediate" evidence="2">
    <location>
        <position position="92"/>
    </location>
</feature>
<feature type="cross-link" description="Peptide (Met-Gly) (interchain with G-Cter in ubiquitin)" evidence="1">
    <location>
        <position position="1"/>
    </location>
</feature>
<organism evidence="5">
    <name type="scientific">Caenorhabditis elegans</name>
    <dbReference type="NCBI Taxonomy" id="6239"/>
    <lineage>
        <taxon>Eukaryota</taxon>
        <taxon>Metazoa</taxon>
        <taxon>Ecdysozoa</taxon>
        <taxon>Nematoda</taxon>
        <taxon>Chromadorea</taxon>
        <taxon>Rhabditida</taxon>
        <taxon>Rhabditina</taxon>
        <taxon>Rhabditomorpha</taxon>
        <taxon>Rhabditoidea</taxon>
        <taxon>Rhabditidae</taxon>
        <taxon>Peloderinae</taxon>
        <taxon>Caenorhabditis</taxon>
    </lineage>
</organism>
<protein>
    <recommendedName>
        <fullName evidence="4">Ubiquitin-conjugating enzyme E2 W</fullName>
        <ecNumber evidence="1">2.3.2.23</ecNumber>
    </recommendedName>
    <alternativeName>
        <fullName evidence="4">E2 ubiquitin-conjugating enzyme W</fullName>
    </alternativeName>
    <alternativeName>
        <fullName evidence="4">N-terminal E2 ubiquitin-conjugating enzyme</fullName>
        <ecNumber evidence="1">2.3.2.25</ecNumber>
    </alternativeName>
    <alternativeName>
        <fullName evidence="4">N-terminus-conjugating E2</fullName>
    </alternativeName>
    <alternativeName>
        <fullName evidence="4">Ubiquitin carrier protein W</fullName>
    </alternativeName>
    <alternativeName>
        <fullName evidence="6">Ubiquitin-conjugating enzyme 16</fullName>
    </alternativeName>
    <alternativeName>
        <fullName evidence="4">Ubiquitin-protein ligase W</fullName>
    </alternativeName>
</protein>
<proteinExistence type="inferred from homology"/>
<dbReference type="EC" id="2.3.2.23" evidence="1"/>
<dbReference type="EC" id="2.3.2.25" evidence="1"/>
<dbReference type="EMBL" id="BX284601">
    <property type="protein sequence ID" value="CAA21716.1"/>
    <property type="molecule type" value="Genomic_DNA"/>
</dbReference>
<dbReference type="PIR" id="T27167">
    <property type="entry name" value="T27167"/>
</dbReference>
<dbReference type="RefSeq" id="NP_493587.1">
    <property type="nucleotide sequence ID" value="NM_061186.5"/>
</dbReference>
<dbReference type="SMR" id="Q9XWF6"/>
<dbReference type="FunCoup" id="Q9XWF6">
    <property type="interactions" value="3494"/>
</dbReference>
<dbReference type="STRING" id="6239.Y54E5B.4.1"/>
<dbReference type="PaxDb" id="6239-Y54E5B.4"/>
<dbReference type="PeptideAtlas" id="Q9XWF6"/>
<dbReference type="EnsemblMetazoa" id="Y54E5B.4.1">
    <property type="protein sequence ID" value="Y54E5B.4.1"/>
    <property type="gene ID" value="WBGene00006711"/>
</dbReference>
<dbReference type="GeneID" id="173354"/>
<dbReference type="KEGG" id="cel:CELE_Y54E5B.4"/>
<dbReference type="UCSC" id="Y54E5B.4">
    <property type="organism name" value="c. elegans"/>
</dbReference>
<dbReference type="AGR" id="WB:WBGene00006711"/>
<dbReference type="CTD" id="173354"/>
<dbReference type="WormBase" id="Y54E5B.4">
    <property type="protein sequence ID" value="CE19228"/>
    <property type="gene ID" value="WBGene00006711"/>
    <property type="gene designation" value="ubc-16"/>
</dbReference>
<dbReference type="eggNOG" id="KOG0427">
    <property type="taxonomic scope" value="Eukaryota"/>
</dbReference>
<dbReference type="GeneTree" id="ENSGT00940000156908"/>
<dbReference type="HOGENOM" id="CLU_030988_15_1_1"/>
<dbReference type="InParanoid" id="Q9XWF6"/>
<dbReference type="OMA" id="WQMDIKV"/>
<dbReference type="OrthoDB" id="406833at2759"/>
<dbReference type="PhylomeDB" id="Q9XWF6"/>
<dbReference type="Reactome" id="R-CEL-8866652">
    <property type="pathway name" value="Synthesis of active ubiquitin: roles of E1 and E2 enzymes"/>
</dbReference>
<dbReference type="Reactome" id="R-CEL-983168">
    <property type="pathway name" value="Antigen processing: Ubiquitination &amp; Proteasome degradation"/>
</dbReference>
<dbReference type="UniPathway" id="UPA00143"/>
<dbReference type="PRO" id="PR:Q9XWF6"/>
<dbReference type="Proteomes" id="UP000001940">
    <property type="component" value="Chromosome I"/>
</dbReference>
<dbReference type="Bgee" id="WBGene00006711">
    <property type="expression patterns" value="Expressed in embryo and 4 other cell types or tissues"/>
</dbReference>
<dbReference type="GO" id="GO:0005634">
    <property type="term" value="C:nucleus"/>
    <property type="evidence" value="ECO:0000318"/>
    <property type="project" value="GO_Central"/>
</dbReference>
<dbReference type="GO" id="GO:0016874">
    <property type="term" value="F:ligase activity"/>
    <property type="evidence" value="ECO:0007669"/>
    <property type="project" value="UniProtKB-KW"/>
</dbReference>
<dbReference type="GO" id="GO:0061631">
    <property type="term" value="F:ubiquitin conjugating enzyme activity"/>
    <property type="evidence" value="ECO:0000318"/>
    <property type="project" value="GO_Central"/>
</dbReference>
<dbReference type="GO" id="GO:0043161">
    <property type="term" value="P:proteasome-mediated ubiquitin-dependent protein catabolic process"/>
    <property type="evidence" value="ECO:0000318"/>
    <property type="project" value="GO_Central"/>
</dbReference>
<dbReference type="GO" id="GO:0000209">
    <property type="term" value="P:protein polyubiquitination"/>
    <property type="evidence" value="ECO:0000318"/>
    <property type="project" value="GO_Central"/>
</dbReference>
<dbReference type="GO" id="GO:0016567">
    <property type="term" value="P:protein ubiquitination"/>
    <property type="evidence" value="ECO:0000316"/>
    <property type="project" value="UniProtKB"/>
</dbReference>
<dbReference type="CDD" id="cd23808">
    <property type="entry name" value="UBCc_UBE2W"/>
    <property type="match status" value="1"/>
</dbReference>
<dbReference type="FunFam" id="3.10.110.10:FF:000022">
    <property type="entry name" value="Ubiquitin-conjugating enzyme E2 W"/>
    <property type="match status" value="1"/>
</dbReference>
<dbReference type="Gene3D" id="3.10.110.10">
    <property type="entry name" value="Ubiquitin Conjugating Enzyme"/>
    <property type="match status" value="1"/>
</dbReference>
<dbReference type="InterPro" id="IPR050113">
    <property type="entry name" value="Ub_conjugating_enzyme"/>
</dbReference>
<dbReference type="InterPro" id="IPR000608">
    <property type="entry name" value="UBQ-conjugat_E2_core"/>
</dbReference>
<dbReference type="InterPro" id="IPR016135">
    <property type="entry name" value="UBQ-conjugating_enzyme/RWD"/>
</dbReference>
<dbReference type="PANTHER" id="PTHR24067">
    <property type="entry name" value="UBIQUITIN-CONJUGATING ENZYME E2"/>
    <property type="match status" value="1"/>
</dbReference>
<dbReference type="Pfam" id="PF00179">
    <property type="entry name" value="UQ_con"/>
    <property type="match status" value="1"/>
</dbReference>
<dbReference type="SMART" id="SM00212">
    <property type="entry name" value="UBCc"/>
    <property type="match status" value="1"/>
</dbReference>
<dbReference type="SUPFAM" id="SSF54495">
    <property type="entry name" value="UBC-like"/>
    <property type="match status" value="1"/>
</dbReference>
<dbReference type="PROSITE" id="PS50127">
    <property type="entry name" value="UBC_2"/>
    <property type="match status" value="1"/>
</dbReference>
<accession>Q9XWF6</accession>
<reference evidence="5" key="1">
    <citation type="journal article" date="1998" name="Science">
        <title>Genome sequence of the nematode C. elegans: a platform for investigating biology.</title>
        <authorList>
            <consortium name="The C. elegans sequencing consortium"/>
        </authorList>
    </citation>
    <scope>NUCLEOTIDE SEQUENCE [LARGE SCALE GENOMIC DNA]</scope>
    <source>
        <strain evidence="5">Bristol N2</strain>
    </source>
</reference>
<reference evidence="4" key="2">
    <citation type="journal article" date="2019" name="Dev. Biol.">
        <title>Ubiquitination is required for the initial removal of paternal organelles in C. elegans.</title>
        <authorList>
            <person name="Molina P."/>
            <person name="Lim Y."/>
            <person name="Boyd L."/>
        </authorList>
    </citation>
    <scope>FUNCTION</scope>
    <scope>DISRUPTION PHENOTYPE</scope>
</reference>
<name>UBE2W_CAEEL</name>
<sequence>MSDAATRRLMKELAQLKSEAPEGLLVDNTSTSNDLKQWKIGVVGAEGTLYAGEVFMLQFTFGPQYPFNSPEVMFVGETIPAHPHIYSNGHICLSILSDDWTPALSVQSVCLSILSMLSSSKEKKHPIDDAIYVRTCSKNPSKTRWWFHDDSV</sequence>
<gene>
    <name evidence="6" type="primary">ubc-16</name>
    <name evidence="6" type="ORF">Y54E5B.4</name>
</gene>
<keyword id="KW-0436">Ligase</keyword>
<keyword id="KW-1185">Reference proteome</keyword>
<keyword id="KW-0808">Transferase</keyword>
<keyword id="KW-0832">Ubl conjugation</keyword>
<keyword id="KW-0833">Ubl conjugation pathway</keyword>
<comment type="function">
    <text evidence="1 3">Accepts ubiquitin from the E1 complex and catalyzes its covalent attachment to other proteins (By similarity). Together with ubc-18, required for the ubiquitination of membranous organelles, and the removal of paternal mitochondria from early embryos (PubMed:31153831).</text>
</comment>
<comment type="catalytic activity">
    <reaction evidence="1">
        <text>S-ubiquitinyl-[E1 ubiquitin-activating enzyme]-L-cysteine + [E2 ubiquitin-conjugating enzyme]-L-cysteine = [E1 ubiquitin-activating enzyme]-L-cysteine + S-ubiquitinyl-[E2 ubiquitin-conjugating enzyme]-L-cysteine.</text>
        <dbReference type="EC" id="2.3.2.23"/>
    </reaction>
</comment>
<comment type="catalytic activity">
    <reaction evidence="1">
        <text>S-ubiquitinyl-[E1 ubiquitin-activating enzyme]-L-cysteine + [acceptor protein]-N-terminal-amino acid = [E1 ubiquitin-activating enzyme]-L-cysteine + N-terminal-ubiquitinyl-[acceptor protein].</text>
        <dbReference type="EC" id="2.3.2.25"/>
    </reaction>
</comment>
<comment type="pathway">
    <text evidence="2">Protein modification; protein ubiquitination.</text>
</comment>
<comment type="disruption phenotype">
    <text evidence="3">RNAi-mediated knockdown does not alter the ubiquitination of membranous organelles (MOs) or the number of MOs (PubMed:31153831). Double RNAi-mediated knockdown together with ubc-18 reduces the ubiquitination of MOs (PubMed:31153831). Double knockdown also reduces the number of lgg-1-positive autophagosome vesicles in embryos (PubMed:31153831).</text>
</comment>
<comment type="similarity">
    <text evidence="2">Belongs to the ubiquitin-conjugating enzyme family.</text>
</comment>